<sequence length="421" mass="46828">MAPQMEKVSEELILPSSPTPQSLKCYKISHLDQLLLTCHIPFILFYPNPLDSNLDPAQTSQHLKQSLSKVLTHFYPLAGRINVNSSVDCNDSGVPFVEARVQAQLSQAIQNVVELEKLDQYLPSAAYPGGKIEVNEDVPLAVKISFFECGGTAIGVNLSHKIADVLSLATFLNAWTATCRGETEIVLPNFDLAARHFPPVDNTPSPELVPDENVVMKRFVFDKEKIGALRAQASSASEEKNFSRVQLVVAYIWKHVIDVTRAKYGAKNKFVVVQAVNLRSRMNPPLPHYAMGNIATLLFAAVDAEWDKDFPDLIGPLRTSLEKTEDDHNHELLKGMTCLYELEPQELLSFTSWCRLGFYDLDFGWGKPLSACTTTFPKRNAALLMDTRSGDGVEAWLPMAEDEMAMLPVELLSLVDSDFSK</sequence>
<accession>Q70PR7</accession>
<organism>
    <name type="scientific">Rauvolfia serpentina</name>
    <name type="common">Serpentine wood</name>
    <name type="synonym">Ophioxylon serpentinum</name>
    <dbReference type="NCBI Taxonomy" id="4060"/>
    <lineage>
        <taxon>Eukaryota</taxon>
        <taxon>Viridiplantae</taxon>
        <taxon>Streptophyta</taxon>
        <taxon>Embryophyta</taxon>
        <taxon>Tracheophyta</taxon>
        <taxon>Spermatophyta</taxon>
        <taxon>Magnoliopsida</taxon>
        <taxon>eudicotyledons</taxon>
        <taxon>Gunneridae</taxon>
        <taxon>Pentapetalae</taxon>
        <taxon>asterids</taxon>
        <taxon>lamiids</taxon>
        <taxon>Gentianales</taxon>
        <taxon>Apocynaceae</taxon>
        <taxon>Rauvolfioideae</taxon>
        <taxon>Vinceae</taxon>
        <taxon>Rauvolfiinae</taxon>
        <taxon>Rauvolfia</taxon>
    </lineage>
</organism>
<gene>
    <name evidence="4" type="primary">ACT</name>
    <name evidence="5" type="synonym">VS</name>
</gene>
<dbReference type="EC" id="2.3.1.160" evidence="1"/>
<dbReference type="EMBL" id="AJ556780">
    <property type="protein sequence ID" value="CAD89104.2"/>
    <property type="molecule type" value="mRNA"/>
</dbReference>
<dbReference type="PDB" id="2BGH">
    <property type="method" value="X-ray"/>
    <property type="resolution" value="2.60 A"/>
    <property type="chains" value="A/B=1-421"/>
</dbReference>
<dbReference type="PDBsum" id="2BGH"/>
<dbReference type="SMR" id="Q70PR7"/>
<dbReference type="KEGG" id="ag:CAD89104"/>
<dbReference type="BRENDA" id="2.3.1.160">
    <property type="organism ID" value="5309"/>
</dbReference>
<dbReference type="UniPathway" id="UPA00310"/>
<dbReference type="EvolutionaryTrace" id="Q70PR7"/>
<dbReference type="GO" id="GO:0050636">
    <property type="term" value="F:vinorine synthase activity"/>
    <property type="evidence" value="ECO:0000314"/>
    <property type="project" value="UniProtKB"/>
</dbReference>
<dbReference type="GO" id="GO:0009820">
    <property type="term" value="P:alkaloid metabolic process"/>
    <property type="evidence" value="ECO:0000314"/>
    <property type="project" value="UniProtKB"/>
</dbReference>
<dbReference type="FunFam" id="3.30.559.10:FF:000063">
    <property type="entry name" value="Transferase family protein"/>
    <property type="match status" value="1"/>
</dbReference>
<dbReference type="Gene3D" id="3.30.559.10">
    <property type="entry name" value="Chloramphenicol acetyltransferase-like domain"/>
    <property type="match status" value="2"/>
</dbReference>
<dbReference type="InterPro" id="IPR023213">
    <property type="entry name" value="CAT-like_dom_sf"/>
</dbReference>
<dbReference type="PANTHER" id="PTHR31623">
    <property type="entry name" value="F21J9.9"/>
    <property type="match status" value="1"/>
</dbReference>
<dbReference type="PANTHER" id="PTHR31623:SF110">
    <property type="entry name" value="VINORINE SYNTHASE-LIKE"/>
    <property type="match status" value="1"/>
</dbReference>
<dbReference type="Pfam" id="PF02458">
    <property type="entry name" value="Transferase"/>
    <property type="match status" value="1"/>
</dbReference>
<evidence type="ECO:0000269" key="1">
    <source>
    </source>
</evidence>
<evidence type="ECO:0000269" key="2">
    <source>
    </source>
</evidence>
<evidence type="ECO:0000269" key="3">
    <source>
    </source>
</evidence>
<evidence type="ECO:0000303" key="4">
    <source>
    </source>
</evidence>
<evidence type="ECO:0000303" key="5">
    <source>
    </source>
</evidence>
<evidence type="ECO:0000305" key="6"/>
<evidence type="ECO:0000305" key="7">
    <source>
    </source>
</evidence>
<evidence type="ECO:0000305" key="8">
    <source>
    </source>
</evidence>
<evidence type="ECO:0007829" key="9">
    <source>
        <dbReference type="PDB" id="2BGH"/>
    </source>
</evidence>
<protein>
    <recommendedName>
        <fullName evidence="4 5">Vinorine synthase</fullName>
        <shortName evidence="5">RsVS</shortName>
        <ecNumber evidence="1">2.3.1.160</ecNumber>
    </recommendedName>
</protein>
<proteinExistence type="evidence at protein level"/>
<reference key="1">
    <citation type="journal article" date="2004" name="Bioorg. Med. Chem.">
        <title>Acetyltransfer in natural product biosynthesis -- functional cloning and molecular analysis of vinorine synthase.</title>
        <authorList>
            <person name="Bayer A."/>
            <person name="Ma X."/>
            <person name="Stoeckigt J."/>
        </authorList>
    </citation>
    <scope>NUCLEOTIDE SEQUENCE [MRNA]</scope>
    <scope>PROTEIN SEQUENCE OF 2-21; 132-143; 181-195; 219-225 AND 245-254</scope>
    <scope>MUTAGENESIS OF SER-16; SER-29; ASP-32; SER-68; CYS-89; CYS-149; HIS-160; ASP-164; SER-243; ASN-293; ASP-360; ASP-362 AND SER-413</scope>
    <scope>FUNCTION</scope>
    <scope>ACTIVE SITES</scope>
    <scope>BIOPHYSICOCHEMICAL PROPERTIES</scope>
    <scope>CATALYTIC ACTIVITY</scope>
    <scope>ACTIVITY REGULATION</scope>
    <scope>PATHWAY</scope>
</reference>
<reference key="2">
    <citation type="journal article" date="2024" name="Nat. Commun.">
        <title>De novo biosynthesis of antiarrhythmic alkaloid ajmaline.</title>
        <authorList>
            <person name="Guo J."/>
            <person name="Gao D."/>
            <person name="Lian J."/>
            <person name="Qu Y."/>
        </authorList>
    </citation>
    <scope>FUNCTION</scope>
    <scope>PATHWAY</scope>
    <scope>BIOTECHNOLOGY</scope>
    <scope>TISSUE SPECIFICITY</scope>
</reference>
<reference key="3">
    <citation type="journal article" date="2005" name="J. Biol. Chem.">
        <title>Crystal structure of vinorine synthase, the first representative of the BAHD superfamily.</title>
        <authorList>
            <person name="Ma X."/>
            <person name="Koepke J."/>
            <person name="Panjikar S."/>
            <person name="Fritzsch G."/>
            <person name="Stoeckigt J."/>
        </authorList>
    </citation>
    <scope>X-RAY CRYSTALLOGRAPHY (2.6 ANGSTROMS)</scope>
    <scope>ACTIVE SITES</scope>
    <scope>SUBUNIT</scope>
</reference>
<comment type="function">
    <text evidence="1 3">Acetyltransferase involved in the biosynthesis of ajmaline-type monoterpenoid indole alkaloids (MIAs) natural products, important plant-derived pharmaceuticals used in the therapy of heart disorders (PubMed:15110860, PubMed:38212296). Catalyzes the conversion of 16-epivellosimine to vinorine, precursor of vomilenine, an intermediate chemical in the biosynthesis of ajmaline (PubMed:15110860). Acts on gardneral, but not on polyneuridine aldehyde or N-methylgardneral (PubMed:15110860).</text>
</comment>
<comment type="catalytic activity">
    <reaction evidence="1">
        <text>16-epivellosimine + acetyl-CoA = vinorine + CoA</text>
        <dbReference type="Rhea" id="RHEA:24016"/>
        <dbReference type="ChEBI" id="CHEBI:16425"/>
        <dbReference type="ChEBI" id="CHEBI:16791"/>
        <dbReference type="ChEBI" id="CHEBI:57287"/>
        <dbReference type="ChEBI" id="CHEBI:57288"/>
        <dbReference type="EC" id="2.3.1.160"/>
    </reaction>
    <physiologicalReaction direction="left-to-right" evidence="1">
        <dbReference type="Rhea" id="RHEA:24017"/>
    </physiologicalReaction>
</comment>
<comment type="activity regulation">
    <text evidence="1">Complete inhibition by 4-(2-aminoethyl)-benzenesulfonyl fluoride (AEBSF), N-tosyl-L-phenylalanine chloromethylketone (TPCK), Hg(2+) and diethyl-pyrocarbonate (DEPC) (PubMed:15110860). 50% inhibition by N-(N-(L-3-trans-carboxirane-2-carbonyl)-L-leucyl)-agmanitine (E-64), N-alpha-p-tosyl-L-lysine chloromethylketone (TLCK) and phenylmethylsulfonyl fluoride (PMSF) (PubMed:15110860).</text>
</comment>
<comment type="biophysicochemical properties">
    <kinetics>
        <KM evidence="1">57 uM for Acetyl-CoA</KM>
        <KM evidence="1">7.5 uM for gardneral</KM>
        <KM evidence="1">63 uM for CoA</KM>
        <KM evidence="1">10 uM for vinorine</KM>
        <Vmax evidence="1">3.9 umol/min/mg enzyme for the forward reaction</Vmax>
        <Vmax evidence="1">44.1 umol/min/mg enzyme for the reverse reaction</Vmax>
        <text evidence="1">Except vinorine, no other acetylated alkaloids are deacetylated by the reverse reaction.</text>
    </kinetics>
    <phDependence>
        <text evidence="1">Optimum pH is 7.8.</text>
    </phDependence>
    <temperatureDependence>
        <text evidence="1">Optimum temperature is 35 degrees Celsius.</text>
    </temperatureDependence>
</comment>
<comment type="pathway">
    <text evidence="1 3">Alkaloid biosynthesis; ajmaline biosynthesis.</text>
</comment>
<comment type="subunit">
    <text evidence="2">Monomer.</text>
</comment>
<comment type="tissue specificity">
    <text evidence="3">Mainly expressed in roots and, to a lower level, in leaves.</text>
</comment>
<comment type="biotechnology">
    <text evidence="3">The strictosidine aglycone-producing AJM7-DeltaHYS yeast strain expressing pathway genes of the VOM module, RsGS, SBE (GsSBE, RsSBE1 or RsSBE2), RsPNAE, RsVS and RsVH, accumulates vomilenine (PubMed:38212296). Additionnal expression of pathway genes of the AJM module, RsVR, RsDHVR, AAE (RsAAE1 or RsAAE2) and RsNNMT, leads to the production of ajmaline (PubMed:38212296). Ajmaline is an anti-arrhythmic alkaloid commercially used as an efficient drug for the treatment of arrhythmic heart disorder (PubMed:38212296).</text>
</comment>
<comment type="similarity">
    <text evidence="6">Belongs to the plant acyltransferase family.</text>
</comment>
<keyword id="KW-0002">3D-structure</keyword>
<keyword id="KW-0012">Acyltransferase</keyword>
<keyword id="KW-0017">Alkaloid metabolism</keyword>
<keyword id="KW-0903">Direct protein sequencing</keyword>
<keyword id="KW-0808">Transferase</keyword>
<name>VINSY_RAUSE</name>
<feature type="initiator methionine" description="Removed" evidence="1">
    <location>
        <position position="1"/>
    </location>
</feature>
<feature type="chain" id="PRO_0000295862" description="Vinorine synthase">
    <location>
        <begin position="2"/>
        <end position="421"/>
    </location>
</feature>
<feature type="active site" description="Proton acceptor" evidence="7 8">
    <location>
        <position position="160"/>
    </location>
</feature>
<feature type="active site" description="Proton acceptor" evidence="7 8">
    <location>
        <position position="362"/>
    </location>
</feature>
<feature type="mutagenesis site" description="29% reduction of activity." evidence="1">
    <original>S</original>
    <variation>A</variation>
    <location>
        <position position="16"/>
    </location>
</feature>
<feature type="mutagenesis site" description="75% reduction of activity." evidence="1">
    <original>S</original>
    <variation>A</variation>
    <location>
        <position position="29"/>
    </location>
</feature>
<feature type="mutagenesis site" description="86% reduction of activity." evidence="1">
    <original>D</original>
    <variation>A</variation>
    <location>
        <position position="32"/>
    </location>
</feature>
<feature type="mutagenesis site" description="No effect." evidence="1">
    <original>S</original>
    <variation>A</variation>
    <location>
        <position position="68"/>
    </location>
</feature>
<feature type="mutagenesis site" description="No effect." evidence="1">
    <original>C</original>
    <variation>A</variation>
    <location>
        <position position="89"/>
    </location>
</feature>
<feature type="mutagenesis site" description="90% reduction of activity." evidence="1">
    <original>C</original>
    <variation>A</variation>
    <location>
        <position position="149"/>
    </location>
</feature>
<feature type="mutagenesis site" description="Total loss of activity." evidence="1">
    <original>H</original>
    <variation>A</variation>
    <location>
        <position position="160"/>
    </location>
</feature>
<feature type="mutagenesis site" description="Total loss of activity." evidence="1">
    <original>D</original>
    <variation>A</variation>
    <location>
        <position position="164"/>
    </location>
</feature>
<feature type="mutagenesis site" description="83% reduction of activity." evidence="1">
    <original>S</original>
    <variation>A</variation>
    <location>
        <position position="243"/>
    </location>
</feature>
<feature type="mutagenesis site" description="32% reduction of activity." evidence="1">
    <original>N</original>
    <variation>A</variation>
    <location>
        <position position="293"/>
    </location>
</feature>
<feature type="mutagenesis site" description="No effect." evidence="1">
    <original>D</original>
    <variation>A</variation>
    <location>
        <position position="360"/>
    </location>
</feature>
<feature type="mutagenesis site" description="65% reduction of activity." evidence="1">
    <original>D</original>
    <variation>A</variation>
    <location>
        <position position="362"/>
    </location>
</feature>
<feature type="mutagenesis site" description="No effect." evidence="1">
    <original>S</original>
    <variation>A</variation>
    <location>
        <position position="413"/>
    </location>
</feature>
<feature type="strand" evidence="9">
    <location>
        <begin position="5"/>
        <end position="14"/>
    </location>
</feature>
<feature type="helix" evidence="9">
    <location>
        <begin position="30"/>
        <end position="33"/>
    </location>
</feature>
<feature type="strand" evidence="9">
    <location>
        <begin position="37"/>
        <end position="46"/>
    </location>
</feature>
<feature type="helix" evidence="9">
    <location>
        <begin position="56"/>
        <end position="70"/>
    </location>
</feature>
<feature type="turn" evidence="9">
    <location>
        <begin position="71"/>
        <end position="73"/>
    </location>
</feature>
<feature type="helix" evidence="9">
    <location>
        <begin position="75"/>
        <end position="78"/>
    </location>
</feature>
<feature type="strand" evidence="9">
    <location>
        <begin position="79"/>
        <end position="82"/>
    </location>
</feature>
<feature type="turn" evidence="9">
    <location>
        <begin position="83"/>
        <end position="85"/>
    </location>
</feature>
<feature type="strand" evidence="9">
    <location>
        <begin position="86"/>
        <end position="88"/>
    </location>
</feature>
<feature type="strand" evidence="9">
    <location>
        <begin position="94"/>
        <end position="103"/>
    </location>
</feature>
<feature type="helix" evidence="9">
    <location>
        <begin position="105"/>
        <end position="109"/>
    </location>
</feature>
<feature type="helix" evidence="9">
    <location>
        <begin position="115"/>
        <end position="121"/>
    </location>
</feature>
<feature type="strand" evidence="9">
    <location>
        <begin position="122"/>
        <end position="124"/>
    </location>
</feature>
<feature type="strand" evidence="9">
    <location>
        <begin position="126"/>
        <end position="132"/>
    </location>
</feature>
<feature type="strand" evidence="9">
    <location>
        <begin position="139"/>
        <end position="146"/>
    </location>
</feature>
<feature type="strand" evidence="9">
    <location>
        <begin position="152"/>
        <end position="159"/>
    </location>
</feature>
<feature type="turn" evidence="9">
    <location>
        <begin position="160"/>
        <end position="162"/>
    </location>
</feature>
<feature type="helix" evidence="9">
    <location>
        <begin position="165"/>
        <end position="179"/>
    </location>
</feature>
<feature type="helix" evidence="9">
    <location>
        <begin position="192"/>
        <end position="196"/>
    </location>
</feature>
<feature type="strand" evidence="9">
    <location>
        <begin position="212"/>
        <end position="221"/>
    </location>
</feature>
<feature type="helix" evidence="9">
    <location>
        <begin position="223"/>
        <end position="232"/>
    </location>
</feature>
<feature type="helix" evidence="9">
    <location>
        <begin position="244"/>
        <end position="263"/>
    </location>
</feature>
<feature type="strand" evidence="9">
    <location>
        <begin position="270"/>
        <end position="278"/>
    </location>
</feature>
<feature type="helix" evidence="9">
    <location>
        <begin position="279"/>
        <end position="281"/>
    </location>
</feature>
<feature type="strand" evidence="9">
    <location>
        <begin position="282"/>
        <end position="284"/>
    </location>
</feature>
<feature type="strand" evidence="9">
    <location>
        <begin position="295"/>
        <end position="302"/>
    </location>
</feature>
<feature type="helix" evidence="9">
    <location>
        <begin position="310"/>
        <end position="313"/>
    </location>
</feature>
<feature type="helix" evidence="9">
    <location>
        <begin position="314"/>
        <end position="320"/>
    </location>
</feature>
<feature type="helix" evidence="9">
    <location>
        <begin position="328"/>
        <end position="340"/>
    </location>
</feature>
<feature type="helix" evidence="9">
    <location>
        <begin position="344"/>
        <end position="346"/>
    </location>
</feature>
<feature type="strand" evidence="9">
    <location>
        <begin position="347"/>
        <end position="353"/>
    </location>
</feature>
<feature type="helix" evidence="9">
    <location>
        <begin position="358"/>
        <end position="360"/>
    </location>
</feature>
<feature type="strand" evidence="9">
    <location>
        <begin position="363"/>
        <end position="365"/>
    </location>
</feature>
<feature type="strand" evidence="9">
    <location>
        <begin position="369"/>
        <end position="372"/>
    </location>
</feature>
<feature type="strand" evidence="9">
    <location>
        <begin position="381"/>
        <end position="386"/>
    </location>
</feature>
<feature type="strand" evidence="9">
    <location>
        <begin position="390"/>
        <end position="400"/>
    </location>
</feature>
<feature type="helix" evidence="9">
    <location>
        <begin position="401"/>
        <end position="406"/>
    </location>
</feature>
<feature type="helix" evidence="9">
    <location>
        <begin position="409"/>
        <end position="412"/>
    </location>
</feature>